<organism>
    <name type="scientific">Sorangium cellulosum (strain So ce56)</name>
    <name type="common">Polyangium cellulosum (strain So ce56)</name>
    <dbReference type="NCBI Taxonomy" id="448385"/>
    <lineage>
        <taxon>Bacteria</taxon>
        <taxon>Pseudomonadati</taxon>
        <taxon>Myxococcota</taxon>
        <taxon>Polyangia</taxon>
        <taxon>Polyangiales</taxon>
        <taxon>Polyangiaceae</taxon>
        <taxon>Sorangium</taxon>
    </lineage>
</organism>
<sequence length="430" mass="46412">MSVRLWDKGGATDAQMLRYTSRDDWQLDQRLLAYDLRATIAHVRGLARIGVLSEAERDALVRELEVLSAQNEAGELRLTEDDEDGHSAIEAALVARIGDAGKKVHTGRSRNDQVLVATRLYERDALDELAENAAAGARALLDLARREAETPMPGYTHLQRAVPSSVGYWAASFVEGLADAIDVVRATRALVDRCPLGGAAGFGVNLPLDRVGVARELGFAGVALNPLASQTSRGIIEAQILAAAWQVMAVSRRLAWDLSLFAMSELAFIRLPEAFTTGSSIMPQKRNPDVVELMRAACSVVQGALAEVQSIVALPSGYHRDLQLTKGPTMRGLDEALATSRLLPRLVEGLAFDRERMARAITPECFATDRAVELAVEGVPFREAYRKVAAEIAALPAGDAAASLRARVSLGAPGNLALDDLARRLDRHAR</sequence>
<dbReference type="EC" id="4.3.2.1" evidence="1"/>
<dbReference type="EMBL" id="AM746676">
    <property type="protein sequence ID" value="CAN91917.1"/>
    <property type="molecule type" value="Genomic_DNA"/>
</dbReference>
<dbReference type="RefSeq" id="WP_012234394.1">
    <property type="nucleotide sequence ID" value="NC_010162.1"/>
</dbReference>
<dbReference type="SMR" id="A9FJ48"/>
<dbReference type="STRING" id="448385.sce1759"/>
<dbReference type="KEGG" id="scl:sce1759"/>
<dbReference type="eggNOG" id="COG0165">
    <property type="taxonomic scope" value="Bacteria"/>
</dbReference>
<dbReference type="HOGENOM" id="CLU_027272_2_0_7"/>
<dbReference type="OrthoDB" id="9769623at2"/>
<dbReference type="BioCyc" id="SCEL448385:SCE_RS09050-MONOMER"/>
<dbReference type="UniPathway" id="UPA00068">
    <property type="reaction ID" value="UER00114"/>
</dbReference>
<dbReference type="Proteomes" id="UP000002139">
    <property type="component" value="Chromosome"/>
</dbReference>
<dbReference type="GO" id="GO:0005829">
    <property type="term" value="C:cytosol"/>
    <property type="evidence" value="ECO:0007669"/>
    <property type="project" value="TreeGrafter"/>
</dbReference>
<dbReference type="GO" id="GO:0004056">
    <property type="term" value="F:argininosuccinate lyase activity"/>
    <property type="evidence" value="ECO:0007669"/>
    <property type="project" value="UniProtKB-UniRule"/>
</dbReference>
<dbReference type="GO" id="GO:0042450">
    <property type="term" value="P:arginine biosynthetic process via ornithine"/>
    <property type="evidence" value="ECO:0007669"/>
    <property type="project" value="InterPro"/>
</dbReference>
<dbReference type="GO" id="GO:0006526">
    <property type="term" value="P:L-arginine biosynthetic process"/>
    <property type="evidence" value="ECO:0007669"/>
    <property type="project" value="UniProtKB-UniRule"/>
</dbReference>
<dbReference type="CDD" id="cd01359">
    <property type="entry name" value="Argininosuccinate_lyase"/>
    <property type="match status" value="1"/>
</dbReference>
<dbReference type="Gene3D" id="1.10.40.30">
    <property type="entry name" value="Fumarase/aspartase (C-terminal domain)"/>
    <property type="match status" value="1"/>
</dbReference>
<dbReference type="Gene3D" id="1.20.200.10">
    <property type="entry name" value="Fumarase/aspartase (Central domain)"/>
    <property type="match status" value="1"/>
</dbReference>
<dbReference type="Gene3D" id="1.10.275.10">
    <property type="entry name" value="Fumarase/aspartase (N-terminal domain)"/>
    <property type="match status" value="1"/>
</dbReference>
<dbReference type="HAMAP" id="MF_00006">
    <property type="entry name" value="Arg_succ_lyase"/>
    <property type="match status" value="1"/>
</dbReference>
<dbReference type="InterPro" id="IPR009049">
    <property type="entry name" value="Argininosuccinate_lyase"/>
</dbReference>
<dbReference type="InterPro" id="IPR024083">
    <property type="entry name" value="Fumarase/histidase_N"/>
</dbReference>
<dbReference type="InterPro" id="IPR020557">
    <property type="entry name" value="Fumarate_lyase_CS"/>
</dbReference>
<dbReference type="InterPro" id="IPR000362">
    <property type="entry name" value="Fumarate_lyase_fam"/>
</dbReference>
<dbReference type="InterPro" id="IPR022761">
    <property type="entry name" value="Fumarate_lyase_N"/>
</dbReference>
<dbReference type="InterPro" id="IPR008948">
    <property type="entry name" value="L-Aspartase-like"/>
</dbReference>
<dbReference type="NCBIfam" id="TIGR00838">
    <property type="entry name" value="argH"/>
    <property type="match status" value="1"/>
</dbReference>
<dbReference type="PANTHER" id="PTHR43814">
    <property type="entry name" value="ARGININOSUCCINATE LYASE"/>
    <property type="match status" value="1"/>
</dbReference>
<dbReference type="PANTHER" id="PTHR43814:SF1">
    <property type="entry name" value="ARGININOSUCCINATE LYASE"/>
    <property type="match status" value="1"/>
</dbReference>
<dbReference type="Pfam" id="PF00206">
    <property type="entry name" value="Lyase_1"/>
    <property type="match status" value="1"/>
</dbReference>
<dbReference type="PRINTS" id="PR00145">
    <property type="entry name" value="ARGSUCLYASE"/>
</dbReference>
<dbReference type="PRINTS" id="PR00149">
    <property type="entry name" value="FUMRATELYASE"/>
</dbReference>
<dbReference type="SUPFAM" id="SSF48557">
    <property type="entry name" value="L-aspartase-like"/>
    <property type="match status" value="1"/>
</dbReference>
<dbReference type="PROSITE" id="PS00163">
    <property type="entry name" value="FUMARATE_LYASES"/>
    <property type="match status" value="1"/>
</dbReference>
<evidence type="ECO:0000255" key="1">
    <source>
        <dbReference type="HAMAP-Rule" id="MF_00006"/>
    </source>
</evidence>
<comment type="catalytic activity">
    <reaction evidence="1">
        <text>2-(N(omega)-L-arginino)succinate = fumarate + L-arginine</text>
        <dbReference type="Rhea" id="RHEA:24020"/>
        <dbReference type="ChEBI" id="CHEBI:29806"/>
        <dbReference type="ChEBI" id="CHEBI:32682"/>
        <dbReference type="ChEBI" id="CHEBI:57472"/>
        <dbReference type="EC" id="4.3.2.1"/>
    </reaction>
</comment>
<comment type="pathway">
    <text evidence="1">Amino-acid biosynthesis; L-arginine biosynthesis; L-arginine from L-ornithine and carbamoyl phosphate: step 3/3.</text>
</comment>
<comment type="subcellular location">
    <subcellularLocation>
        <location evidence="1">Cytoplasm</location>
    </subcellularLocation>
</comment>
<comment type="similarity">
    <text evidence="1">Belongs to the lyase 1 family. Argininosuccinate lyase subfamily.</text>
</comment>
<reference key="1">
    <citation type="journal article" date="2007" name="Nat. Biotechnol.">
        <title>Complete genome sequence of the myxobacterium Sorangium cellulosum.</title>
        <authorList>
            <person name="Schneiker S."/>
            <person name="Perlova O."/>
            <person name="Kaiser O."/>
            <person name="Gerth K."/>
            <person name="Alici A."/>
            <person name="Altmeyer M.O."/>
            <person name="Bartels D."/>
            <person name="Bekel T."/>
            <person name="Beyer S."/>
            <person name="Bode E."/>
            <person name="Bode H.B."/>
            <person name="Bolten C.J."/>
            <person name="Choudhuri J.V."/>
            <person name="Doss S."/>
            <person name="Elnakady Y.A."/>
            <person name="Frank B."/>
            <person name="Gaigalat L."/>
            <person name="Goesmann A."/>
            <person name="Groeger C."/>
            <person name="Gross F."/>
            <person name="Jelsbak L."/>
            <person name="Jelsbak L."/>
            <person name="Kalinowski J."/>
            <person name="Kegler C."/>
            <person name="Knauber T."/>
            <person name="Konietzny S."/>
            <person name="Kopp M."/>
            <person name="Krause L."/>
            <person name="Krug D."/>
            <person name="Linke B."/>
            <person name="Mahmud T."/>
            <person name="Martinez-Arias R."/>
            <person name="McHardy A.C."/>
            <person name="Merai M."/>
            <person name="Meyer F."/>
            <person name="Mormann S."/>
            <person name="Munoz-Dorado J."/>
            <person name="Perez J."/>
            <person name="Pradella S."/>
            <person name="Rachid S."/>
            <person name="Raddatz G."/>
            <person name="Rosenau F."/>
            <person name="Rueckert C."/>
            <person name="Sasse F."/>
            <person name="Scharfe M."/>
            <person name="Schuster S.C."/>
            <person name="Suen G."/>
            <person name="Treuner-Lange A."/>
            <person name="Velicer G.J."/>
            <person name="Vorholter F.-J."/>
            <person name="Weissman K.J."/>
            <person name="Welch R.D."/>
            <person name="Wenzel S.C."/>
            <person name="Whitworth D.E."/>
            <person name="Wilhelm S."/>
            <person name="Wittmann C."/>
            <person name="Bloecker H."/>
            <person name="Puehler A."/>
            <person name="Mueller R."/>
        </authorList>
    </citation>
    <scope>NUCLEOTIDE SEQUENCE [LARGE SCALE GENOMIC DNA]</scope>
    <source>
        <strain>So ce56</strain>
    </source>
</reference>
<keyword id="KW-0028">Amino-acid biosynthesis</keyword>
<keyword id="KW-0055">Arginine biosynthesis</keyword>
<keyword id="KW-0963">Cytoplasm</keyword>
<keyword id="KW-0456">Lyase</keyword>
<keyword id="KW-1185">Reference proteome</keyword>
<proteinExistence type="inferred from homology"/>
<feature type="chain" id="PRO_1000116344" description="Argininosuccinate lyase">
    <location>
        <begin position="1"/>
        <end position="430"/>
    </location>
</feature>
<gene>
    <name evidence="1" type="primary">argH</name>
    <name type="ordered locus">sce1759</name>
</gene>
<accession>A9FJ48</accession>
<protein>
    <recommendedName>
        <fullName evidence="1">Argininosuccinate lyase</fullName>
        <shortName evidence="1">ASAL</shortName>
        <ecNumber evidence="1">4.3.2.1</ecNumber>
    </recommendedName>
    <alternativeName>
        <fullName evidence="1">Arginosuccinase</fullName>
    </alternativeName>
</protein>
<name>ARLY_SORC5</name>